<accession>A2BUP3</accession>
<dbReference type="EMBL" id="CP000552">
    <property type="protein sequence ID" value="ABM71504.1"/>
    <property type="molecule type" value="Genomic_DNA"/>
</dbReference>
<dbReference type="RefSeq" id="WP_011819614.1">
    <property type="nucleotide sequence ID" value="NC_008817.1"/>
</dbReference>
<dbReference type="SMR" id="A2BUP3"/>
<dbReference type="STRING" id="167542.P9515_02951"/>
<dbReference type="GeneID" id="60200366"/>
<dbReference type="KEGG" id="pmc:P9515_02951"/>
<dbReference type="eggNOG" id="COG1489">
    <property type="taxonomic scope" value="Bacteria"/>
</dbReference>
<dbReference type="HOGENOM" id="CLU_052299_2_0_3"/>
<dbReference type="OrthoDB" id="9802365at2"/>
<dbReference type="Proteomes" id="UP000001589">
    <property type="component" value="Chromosome"/>
</dbReference>
<dbReference type="GO" id="GO:0003677">
    <property type="term" value="F:DNA binding"/>
    <property type="evidence" value="ECO:0007669"/>
    <property type="project" value="InterPro"/>
</dbReference>
<dbReference type="CDD" id="cd22359">
    <property type="entry name" value="SfsA-like_bacterial"/>
    <property type="match status" value="1"/>
</dbReference>
<dbReference type="Gene3D" id="2.40.50.580">
    <property type="match status" value="1"/>
</dbReference>
<dbReference type="Gene3D" id="3.40.1350.60">
    <property type="match status" value="1"/>
</dbReference>
<dbReference type="HAMAP" id="MF_00095">
    <property type="entry name" value="SfsA"/>
    <property type="match status" value="1"/>
</dbReference>
<dbReference type="InterPro" id="IPR005224">
    <property type="entry name" value="SfsA"/>
</dbReference>
<dbReference type="InterPro" id="IPR040452">
    <property type="entry name" value="SfsA_C"/>
</dbReference>
<dbReference type="InterPro" id="IPR041465">
    <property type="entry name" value="SfsA_N"/>
</dbReference>
<dbReference type="NCBIfam" id="TIGR00230">
    <property type="entry name" value="sfsA"/>
    <property type="match status" value="1"/>
</dbReference>
<dbReference type="PANTHER" id="PTHR30545">
    <property type="entry name" value="SUGAR FERMENTATION STIMULATION PROTEIN A"/>
    <property type="match status" value="1"/>
</dbReference>
<dbReference type="PANTHER" id="PTHR30545:SF2">
    <property type="entry name" value="SUGAR FERMENTATION STIMULATION PROTEIN A"/>
    <property type="match status" value="1"/>
</dbReference>
<dbReference type="Pfam" id="PF03749">
    <property type="entry name" value="SfsA"/>
    <property type="match status" value="1"/>
</dbReference>
<dbReference type="Pfam" id="PF17746">
    <property type="entry name" value="SfsA_N"/>
    <property type="match status" value="1"/>
</dbReference>
<name>SFSA_PROM5</name>
<protein>
    <recommendedName>
        <fullName evidence="1">Sugar fermentation stimulation protein homolog</fullName>
    </recommendedName>
</protein>
<gene>
    <name evidence="1" type="primary">sfsA</name>
    <name type="ordered locus">P9515_02951</name>
</gene>
<evidence type="ECO:0000255" key="1">
    <source>
        <dbReference type="HAMAP-Rule" id="MF_00095"/>
    </source>
</evidence>
<organism>
    <name type="scientific">Prochlorococcus marinus (strain MIT 9515)</name>
    <dbReference type="NCBI Taxonomy" id="167542"/>
    <lineage>
        <taxon>Bacteria</taxon>
        <taxon>Bacillati</taxon>
        <taxon>Cyanobacteriota</taxon>
        <taxon>Cyanophyceae</taxon>
        <taxon>Synechococcales</taxon>
        <taxon>Prochlorococcaceae</taxon>
        <taxon>Prochlorococcus</taxon>
    </lineage>
</organism>
<sequence length="249" mass="28350">MDDRIINFEPLIEGVLIKRYKRFLSDIKLDNGEIVTAHCANTGPMKGLLNEGAKVRISYSSSPKRKLSWTWEQVEVTGINNEKVWVGINTLFANKLIKTVIEKNLLKDKLGDIATIQSEVVYGQDKKSRIDFLLTPKISNPDNRKIFIEVKNTTWKKNKIALFPDTETKRGQKHLIELKGVMPESKSVLVPCITRKDVDFFGPGDEADPIYGDLFRDSIDAGMLLIPCCFEFHKDHITWKGFKPLKLDG</sequence>
<comment type="similarity">
    <text evidence="1">Belongs to the SfsA family.</text>
</comment>
<feature type="chain" id="PRO_1000008003" description="Sugar fermentation stimulation protein homolog">
    <location>
        <begin position="1"/>
        <end position="249"/>
    </location>
</feature>
<reference key="1">
    <citation type="journal article" date="2007" name="PLoS Genet.">
        <title>Patterns and implications of gene gain and loss in the evolution of Prochlorococcus.</title>
        <authorList>
            <person name="Kettler G.C."/>
            <person name="Martiny A.C."/>
            <person name="Huang K."/>
            <person name="Zucker J."/>
            <person name="Coleman M.L."/>
            <person name="Rodrigue S."/>
            <person name="Chen F."/>
            <person name="Lapidus A."/>
            <person name="Ferriera S."/>
            <person name="Johnson J."/>
            <person name="Steglich C."/>
            <person name="Church G.M."/>
            <person name="Richardson P."/>
            <person name="Chisholm S.W."/>
        </authorList>
    </citation>
    <scope>NUCLEOTIDE SEQUENCE [LARGE SCALE GENOMIC DNA]</scope>
    <source>
        <strain>MIT 9515</strain>
    </source>
</reference>
<proteinExistence type="inferred from homology"/>